<protein>
    <recommendedName>
        <fullName>U5-hexatoxin-Mr1a</fullName>
        <shortName>U5-HXTX-Mr1a</shortName>
    </recommendedName>
    <alternativeName>
        <fullName>Raventoxin I</fullName>
    </alternativeName>
    <alternativeName>
        <fullName>Raventoxin-1</fullName>
    </alternativeName>
</protein>
<reference key="1">
    <citation type="journal article" date="2003" name="Toxicon">
        <title>Purification and characterization of raventoxin-I and raventoxin-III, two neurotoxic peptides from the venom of the spider Macrothele raveni.</title>
        <authorList>
            <person name="Zeng X.-Z."/>
            <person name="Xiao Q.-B."/>
            <person name="Liang S.-P."/>
        </authorList>
    </citation>
    <scope>PROTEIN SEQUENCE</scope>
    <scope>FUNCTION</scope>
    <scope>CHARACTERIZATION</scope>
    <scope>MASS SPECTROMETRY</scope>
    <scope>TOXIC DOSE</scope>
    <source>
        <tissue>Venom</tissue>
    </source>
</reference>
<name>TXR1_MACRV</name>
<proteinExistence type="evidence at protein level"/>
<dbReference type="SMR" id="P61233"/>
<dbReference type="ArachnoServer" id="AS000416">
    <property type="toxin name" value="U5-hexatoxin-Mr1a"/>
</dbReference>
<dbReference type="GO" id="GO:0005576">
    <property type="term" value="C:extracellular region"/>
    <property type="evidence" value="ECO:0007669"/>
    <property type="project" value="UniProtKB-SubCell"/>
</dbReference>
<dbReference type="GO" id="GO:0090729">
    <property type="term" value="F:toxin activity"/>
    <property type="evidence" value="ECO:0007669"/>
    <property type="project" value="UniProtKB-KW"/>
</dbReference>
<organism>
    <name type="scientific">Macrothele raveni</name>
    <name type="common">Funnel-web spider</name>
    <dbReference type="NCBI Taxonomy" id="269627"/>
    <lineage>
        <taxon>Eukaryota</taxon>
        <taxon>Metazoa</taxon>
        <taxon>Ecdysozoa</taxon>
        <taxon>Arthropoda</taxon>
        <taxon>Chelicerata</taxon>
        <taxon>Arachnida</taxon>
        <taxon>Araneae</taxon>
        <taxon>Mygalomorphae</taxon>
        <taxon>Macrothelidae</taxon>
        <taxon>Macrothele</taxon>
    </lineage>
</organism>
<accession>P61233</accession>
<feature type="chain" id="PRO_0000087680" description="U5-hexatoxin-Mr1a">
    <location>
        <begin position="1"/>
        <end position="43"/>
    </location>
</feature>
<feature type="disulfide bond" evidence="3">
    <location>
        <begin position="1"/>
        <end position="16"/>
    </location>
</feature>
<feature type="disulfide bond" evidence="3">
    <location>
        <begin position="8"/>
        <end position="21"/>
    </location>
</feature>
<feature type="disulfide bond" evidence="3">
    <location>
        <begin position="15"/>
        <end position="36"/>
    </location>
</feature>
<feature type="disulfide bond" evidence="3">
    <location>
        <begin position="17"/>
        <end position="43"/>
    </location>
</feature>
<sequence length="43" mass="4849">CGTNRAWCRNAKDHCCCGYSCVKPIWASKPEDDGYCWKKFGGC</sequence>
<comment type="function">
    <text evidence="2">This toxin blocks the neuromuscular transmission, and also acts on muscle. It exerts an effect of first exciting and then inhibiting the contraction of muscle. This toxin is active only against mammals.</text>
</comment>
<comment type="subcellular location">
    <subcellularLocation>
        <location evidence="1">Secreted</location>
    </subcellularLocation>
</comment>
<comment type="tissue specificity">
    <text>Expressed by the venom gland.</text>
</comment>
<comment type="domain">
    <text evidence="3">The presence of a 'disulfide through disulfide knot' structurally defines this protein as a knottin.</text>
</comment>
<comment type="PTM">
    <text>Contains 4 disulfide bonds.</text>
</comment>
<comment type="mass spectrometry" mass="4841.11" method="MALDI" evidence="2"/>
<comment type="toxic dose">
    <text evidence="2">LD(50) is 0.772 mg/kg by intraabdominal injection into mice.</text>
</comment>
<comment type="similarity">
    <text>Belongs to the neurotoxin 35 family.</text>
</comment>
<evidence type="ECO:0000250" key="1"/>
<evidence type="ECO:0000269" key="2">
    <source>
    </source>
</evidence>
<evidence type="ECO:0000305" key="3"/>
<keyword id="KW-0903">Direct protein sequencing</keyword>
<keyword id="KW-1015">Disulfide bond</keyword>
<keyword id="KW-0960">Knottin</keyword>
<keyword id="KW-0528">Neurotoxin</keyword>
<keyword id="KW-0964">Secreted</keyword>
<keyword id="KW-0800">Toxin</keyword>